<protein>
    <recommendedName>
        <fullName>Putative E3 ubiquitin-protein ligase UNKL</fullName>
        <ecNumber>2.3.2.-</ecNumber>
    </recommendedName>
    <alternativeName>
        <fullName>RING finger protein unkempt-like</fullName>
    </alternativeName>
    <alternativeName>
        <fullName>Zinc finger CCCH domain-containing protein 5-like</fullName>
    </alternativeName>
</protein>
<gene>
    <name type="primary">UNKL</name>
    <name type="synonym">C16orf28</name>
    <name type="synonym">ZC3H5L</name>
    <name type="synonym">ZC3HDC5L</name>
</gene>
<comment type="function">
    <text evidence="5">May participate in a protein complex showing an E3 ligase activity regulated by RAC1. Ubiquitination is directed towards itself and possibly other substrates, such as SMARCD2/BAF60b. Intrinsic E3 ligase activity has not been proven.</text>
</comment>
<comment type="pathway">
    <text>Protein modification; protein ubiquitination.</text>
</comment>
<comment type="subunit">
    <text evidence="5">Isoform 4 (C-terminal) interacts with the GTP-bound form of RAC1. Isoform 4 (C-terminal) interacts with SMARCD2/BAF60b.</text>
</comment>
<comment type="interaction">
    <interactant intactId="EBI-7797561">
        <id>Q9H9P5</id>
    </interactant>
    <interactant intactId="EBI-413628">
        <id>P63000</id>
        <label>RAC1</label>
    </interactant>
    <organismsDiffer>false</organismsDiffer>
    <experiments>2</experiments>
</comment>
<comment type="interaction">
    <interactant intactId="EBI-7797561">
        <id>Q9H9P5</id>
    </interactant>
    <interactant intactId="EBI-358441">
        <id>Q92925</id>
        <label>SMARCD2</label>
    </interactant>
    <organismsDiffer>false</organismsDiffer>
    <experiments>2</experiments>
</comment>
<comment type="interaction">
    <interactant intactId="EBI-12817837">
        <id>Q9H9P5-5</id>
    </interactant>
    <interactant intactId="EBI-11954292">
        <id>Q86V38</id>
        <label>ATN1</label>
    </interactant>
    <organismsDiffer>false</organismsDiffer>
    <experiments>3</experiments>
</comment>
<comment type="interaction">
    <interactant intactId="EBI-12817837">
        <id>Q9H9P5-5</id>
    </interactant>
    <interactant intactId="EBI-8624731">
        <id>P0C7T5</id>
        <label>ATXN1L</label>
    </interactant>
    <organismsDiffer>false</organismsDiffer>
    <experiments>3</experiments>
</comment>
<comment type="interaction">
    <interactant intactId="EBI-12817837">
        <id>Q9H9P5-5</id>
    </interactant>
    <interactant intactId="EBI-747185">
        <id>O95817</id>
        <label>BAG3</label>
    </interactant>
    <organismsDiffer>false</organismsDiffer>
    <experiments>3</experiments>
</comment>
<comment type="interaction">
    <interactant intactId="EBI-12817837">
        <id>Q9H9P5-5</id>
    </interactant>
    <interactant intactId="EBI-2949658">
        <id>O95429</id>
        <label>BAG4</label>
    </interactant>
    <organismsDiffer>false</organismsDiffer>
    <experiments>3</experiments>
</comment>
<comment type="interaction">
    <interactant intactId="EBI-12817837">
        <id>Q9H9P5-5</id>
    </interactant>
    <interactant intactId="EBI-12011224">
        <id>Q9NPB3</id>
        <label>CABP2</label>
    </interactant>
    <organismsDiffer>false</organismsDiffer>
    <experiments>3</experiments>
</comment>
<comment type="interaction">
    <interactant intactId="EBI-12817837">
        <id>Q9H9P5-5</id>
    </interactant>
    <interactant intactId="EBI-11530605">
        <id>Q9H257-2</id>
        <label>CARD9</label>
    </interactant>
    <organismsDiffer>false</organismsDiffer>
    <experiments>3</experiments>
</comment>
<comment type="interaction">
    <interactant intactId="EBI-12817837">
        <id>Q9H9P5-5</id>
    </interactant>
    <interactant intactId="EBI-10192698">
        <id>Q02930-3</id>
        <label>CREB5</label>
    </interactant>
    <organismsDiffer>false</organismsDiffer>
    <experiments>3</experiments>
</comment>
<comment type="interaction">
    <interactant intactId="EBI-12817837">
        <id>Q9H9P5-5</id>
    </interactant>
    <interactant intactId="EBI-6875961">
        <id>P02489</id>
        <label>CRYAA</label>
    </interactant>
    <organismsDiffer>false</organismsDiffer>
    <experiments>3</experiments>
</comment>
<comment type="interaction">
    <interactant intactId="EBI-12817837">
        <id>Q9H9P5-5</id>
    </interactant>
    <interactant intactId="EBI-750444">
        <id>P53672</id>
        <label>CRYBA2</label>
    </interactant>
    <organismsDiffer>false</organismsDiffer>
    <experiments>3</experiments>
</comment>
<comment type="interaction">
    <interactant intactId="EBI-12817837">
        <id>Q9H9P5-5</id>
    </interactant>
    <interactant intactId="EBI-11956479">
        <id>P23142-4</id>
        <label>FBLN1</label>
    </interactant>
    <organismsDiffer>false</organismsDiffer>
    <experiments>3</experiments>
</comment>
<comment type="interaction">
    <interactant intactId="EBI-12817837">
        <id>Q9H9P5-5</id>
    </interactant>
    <interactant intactId="EBI-725515">
        <id>O43559</id>
        <label>FRS3</label>
    </interactant>
    <organismsDiffer>false</organismsDiffer>
    <experiments>3</experiments>
</comment>
<comment type="interaction">
    <interactant intactId="EBI-12817837">
        <id>Q9H9P5-5</id>
    </interactant>
    <interactant intactId="EBI-25913156">
        <id>O14908-2</id>
        <label>GIPC1</label>
    </interactant>
    <organismsDiffer>false</organismsDiffer>
    <experiments>3</experiments>
</comment>
<comment type="interaction">
    <interactant intactId="EBI-12817837">
        <id>Q9H9P5-5</id>
    </interactant>
    <interactant intactId="EBI-352986">
        <id>P52597</id>
        <label>HNRNPF</label>
    </interactant>
    <organismsDiffer>false</organismsDiffer>
    <experiments>3</experiments>
</comment>
<comment type="interaction">
    <interactant intactId="EBI-12817837">
        <id>Q9H9P5-5</id>
    </interactant>
    <interactant intactId="EBI-740785">
        <id>P49639</id>
        <label>HOXA1</label>
    </interactant>
    <organismsDiffer>false</organismsDiffer>
    <experiments>3</experiments>
</comment>
<comment type="interaction">
    <interactant intactId="EBI-12817837">
        <id>Q9H9P5-5</id>
    </interactant>
    <interactant intactId="EBI-4397613">
        <id>Q7L273</id>
        <label>KCTD9</label>
    </interactant>
    <organismsDiffer>false</organismsDiffer>
    <experiments>3</experiments>
</comment>
<comment type="interaction">
    <interactant intactId="EBI-12817837">
        <id>Q9H9P5-5</id>
    </interactant>
    <interactant intactId="EBI-2432309">
        <id>Q92876</id>
        <label>KLK6</label>
    </interactant>
    <organismsDiffer>false</organismsDiffer>
    <experiments>3</experiments>
</comment>
<comment type="interaction">
    <interactant intactId="EBI-12817837">
        <id>Q9H9P5-5</id>
    </interactant>
    <interactant intactId="EBI-8639312">
        <id>P25800</id>
        <label>LMO1</label>
    </interactant>
    <organismsDiffer>false</organismsDiffer>
    <experiments>4</experiments>
</comment>
<comment type="interaction">
    <interactant intactId="EBI-12817837">
        <id>Q9H9P5-5</id>
    </interactant>
    <interactant intactId="EBI-10261509">
        <id>Q8IV28</id>
        <label>NID2</label>
    </interactant>
    <organismsDiffer>false</organismsDiffer>
    <experiments>3</experiments>
</comment>
<comment type="interaction">
    <interactant intactId="EBI-12817837">
        <id>Q9H9P5-5</id>
    </interactant>
    <interactant intactId="EBI-741158">
        <id>Q96HA8</id>
        <label>NTAQ1</label>
    </interactant>
    <organismsDiffer>false</organismsDiffer>
    <experiments>3</experiments>
</comment>
<comment type="interaction">
    <interactant intactId="EBI-12817837">
        <id>Q9H9P5-5</id>
    </interactant>
    <interactant intactId="EBI-1055079">
        <id>O15160</id>
        <label>POLR1C</label>
    </interactant>
    <organismsDiffer>false</organismsDiffer>
    <experiments>3</experiments>
</comment>
<comment type="interaction">
    <interactant intactId="EBI-12817837">
        <id>Q9H9P5-5</id>
    </interactant>
    <interactant intactId="EBI-710402">
        <id>Q96I34</id>
        <label>PPP1R16A</label>
    </interactant>
    <organismsDiffer>false</organismsDiffer>
    <experiments>3</experiments>
</comment>
<comment type="interaction">
    <interactant intactId="EBI-12817837">
        <id>Q9H9P5-5</id>
    </interactant>
    <interactant intactId="EBI-958239">
        <id>Q9ULW5</id>
        <label>RAB26</label>
    </interactant>
    <organismsDiffer>false</organismsDiffer>
    <experiments>3</experiments>
</comment>
<comment type="interaction">
    <interactant intactId="EBI-12817837">
        <id>Q9H9P5-5</id>
    </interactant>
    <interactant intactId="EBI-12000762">
        <id>Q7Z5V6-2</id>
        <label>SAXO4</label>
    </interactant>
    <organismsDiffer>false</organismsDiffer>
    <experiments>3</experiments>
</comment>
<comment type="interaction">
    <interactant intactId="EBI-12817837">
        <id>Q9H9P5-5</id>
    </interactant>
    <interactant intactId="EBI-12029034">
        <id>Q96PF1</id>
        <label>TGM7</label>
    </interactant>
    <organismsDiffer>false</organismsDiffer>
    <experiments>3</experiments>
</comment>
<comment type="subcellular location">
    <molecule>Isoform 4</molecule>
    <subcellularLocation>
        <location>Cytoplasm</location>
    </subcellularLocation>
    <subcellularLocation>
        <location>Nucleus</location>
    </subcellularLocation>
    <text>Isoform 4 is primarily localized in the cytoplasm but has the ability to shuttle between the nucleus and the cytoplasm.</text>
</comment>
<comment type="alternative products">
    <event type="alternative splicing"/>
    <isoform>
        <id>Q9H9P5-4</id>
        <name>4</name>
        <sequence type="displayed"/>
    </isoform>
    <isoform>
        <id>Q9H9P5-1</id>
        <name>1</name>
        <sequence type="described" ref="VSP_039433 VSP_039443"/>
    </isoform>
    <isoform>
        <id>Q9H9P5-2</id>
        <name>2</name>
        <sequence type="described" ref="VSP_039433"/>
    </isoform>
    <isoform>
        <id>Q9H9P5-3</id>
        <name>3</name>
        <sequence type="described" ref="VSP_039432 VSP_039441 VSP_039443"/>
    </isoform>
    <isoform>
        <id>Q9H9P5-5</id>
        <name>5</name>
        <sequence type="described" ref="VSP_039436 VSP_039437"/>
    </isoform>
    <isoform>
        <id>Q9H9P5-6</id>
        <name>6</name>
        <sequence type="described" ref="VSP_039434 VSP_039435 VSP_039438 VSP_039439 VSP_039440 VSP_039442"/>
    </isoform>
</comment>
<comment type="domain">
    <text evidence="5">Although this protein contains a RING domain, intrinsic E3 ligase activity has not been proven.</text>
</comment>
<comment type="PTM">
    <text>Isoform 4 is ubiquitinated in the C-terminal. Ubiquitination is enhanced by activated RAC1. The presence of the RING finger domain is not essential for ubiquitination to occur.</text>
</comment>
<comment type="miscellaneous">
    <molecule>Isoform 4</molecule>
    <text>Splice site between exons 6 and 7 is non-canonical.</text>
</comment>
<comment type="similarity">
    <text evidence="8">Belongs to the unkempt family.</text>
</comment>
<comment type="caution">
    <text evidence="9">Was termed Unkempt.</text>
</comment>
<sequence>MPSVSKAAAAALSGSPPQTEKPTHYRYLKEFRTEQCPLFSQHKCAQHRPFTCFHWHFLNQRRRRPLRRRDGTFNYSPDVYCSKYNEATGVCPDGDECPYLHRTTGDTERKYHLRYYKTGTCIHETDARGHCVKNGLHCAFAHGPLDLRPPVCDVRELQAQEALQNGQLGGGEGVPDLQPGVLASQAMIEKILSEDPRWQDANFVLGSYKTEQCPKPPRLCRQGYACPHYHNSRDRRRNPRRFQYRSTPCPSVKHGDEWGEPSRCDGGDGCQYCHSRTEQQFHPESTKCNDMRQTGYCPRGPFCAFAHVEKSLGMVNEWGCHDLHLTSPSSTGSGQPGNAKRRDSPAEGGPRGSEQDSKQNHLAVFAAVHPPAPSVSSSVASSLASSAGSGSSSPTALPAPPARALPLGPASSTVEAVLGSALDLHLSNVNIASLEKDLEEQDGHDLGAAGPRSLAGSAPVAIPGSLPRAPSLHSPSSASTSPLGSLSQPLPGPVGSSAMTPPQQPPPLRSEPGTLGSAASSYSPLGLNGVPGSIWDFVSGSFSPSPSPILSAGPPSSSSASPNGAELARVRRQLDEAKRKIRQWEESWQQVKQVCDAWQREAQEAKERARVADSDRQLALQKKEEVEAQVIFQLRAKQCVACRERAHGAVLRPCQHHILCEPCAATAPECPYCKGQPLQW</sequence>
<feature type="chain" id="PRO_0000278667" description="Putative E3 ubiquitin-protein ligase UNKL">
    <location>
        <begin position="1"/>
        <end position="680"/>
    </location>
</feature>
<feature type="zinc finger region" description="C3H1-type 1" evidence="3">
    <location>
        <begin position="75"/>
        <end position="104"/>
    </location>
</feature>
<feature type="zinc finger region" description="C3H1-type 2" evidence="3">
    <location>
        <begin position="115"/>
        <end position="145"/>
    </location>
</feature>
<feature type="zinc finger region" description="C3H1-type 3" evidence="3">
    <location>
        <begin position="243"/>
        <end position="277"/>
    </location>
</feature>
<feature type="zinc finger region" description="C3H1-type 4" evidence="3">
    <location>
        <begin position="283"/>
        <end position="310"/>
    </location>
</feature>
<feature type="zinc finger region" description="RING-type" evidence="2">
    <location>
        <begin position="639"/>
        <end position="674"/>
    </location>
</feature>
<feature type="region of interest" description="Disordered" evidence="4">
    <location>
        <begin position="1"/>
        <end position="22"/>
    </location>
</feature>
<feature type="region of interest" description="Disordered" evidence="4">
    <location>
        <begin position="326"/>
        <end position="358"/>
    </location>
</feature>
<feature type="region of interest" description="Disordered" evidence="4">
    <location>
        <begin position="375"/>
        <end position="400"/>
    </location>
</feature>
<feature type="region of interest" description="Disordered" evidence="4">
    <location>
        <begin position="442"/>
        <end position="520"/>
    </location>
</feature>
<feature type="region of interest" description="Disordered" evidence="4">
    <location>
        <begin position="545"/>
        <end position="566"/>
    </location>
</feature>
<feature type="coiled-coil region" evidence="1">
    <location>
        <begin position="563"/>
        <end position="619"/>
    </location>
</feature>
<feature type="compositionally biased region" description="Low complexity" evidence="4">
    <location>
        <begin position="326"/>
        <end position="337"/>
    </location>
</feature>
<feature type="compositionally biased region" description="Low complexity" evidence="4">
    <location>
        <begin position="375"/>
        <end position="396"/>
    </location>
</feature>
<feature type="compositionally biased region" description="Low complexity" evidence="4">
    <location>
        <begin position="465"/>
        <end position="497"/>
    </location>
</feature>
<feature type="compositionally biased region" description="Low complexity" evidence="4">
    <location>
        <begin position="545"/>
        <end position="562"/>
    </location>
</feature>
<feature type="splice variant" id="VSP_039432" description="In isoform 3." evidence="7">
    <location>
        <begin position="1"/>
        <end position="501"/>
    </location>
</feature>
<feature type="splice variant" id="VSP_039433" description="In isoform 1 and isoform 2." evidence="6">
    <location>
        <begin position="1"/>
        <end position="498"/>
    </location>
</feature>
<feature type="splice variant" id="VSP_039434" description="In isoform 6." evidence="8">
    <original>E</original>
    <variation>ESLLGVLYPLWAPPPVPAPVGAPTVHPFLARWFSHVPWEPAGSADPRASSTPAGGTTWATGLLGDFDACGSQSRECVKGVWWTLLGFR</variation>
    <location>
        <position position="96"/>
    </location>
</feature>
<feature type="splice variant" id="VSP_039435" description="In isoform 6." evidence="8">
    <original>Q</original>
    <variation>QALLPVALLRHRVAHFS</variation>
    <location>
        <position position="199"/>
    </location>
</feature>
<feature type="splice variant" id="VSP_039436" description="In isoform 5." evidence="7">
    <original>RSTPCPSVKHGDEWGEPSRCDGGDGCQYCHSRT</original>
    <variation>SWQLGRRVLRLSPRANNPRVALPRVHTGPSSTA</variation>
    <location>
        <begin position="245"/>
        <end position="277"/>
    </location>
</feature>
<feature type="splice variant" id="VSP_039437" description="In isoform 5." evidence="7">
    <location>
        <begin position="278"/>
        <end position="680"/>
    </location>
</feature>
<feature type="splice variant" id="VSP_039438" description="In isoform 6." evidence="8">
    <original>E</original>
    <variation>EGPVGSPVSGAFSVFSHAGLVADPSLWYPAEWSWHHVGHSRTINPEGDKPSRLGPAPENIKRGNDFACDGRADAAGMAPHVCVFPIYK</variation>
    <location>
        <position position="284"/>
    </location>
</feature>
<feature type="splice variant" id="VSP_039439" description="In isoform 6." evidence="8">
    <original>Q</original>
    <variation>QGVRAHGVYVFEQ</variation>
    <location>
        <position position="359"/>
    </location>
</feature>
<feature type="splice variant" id="VSP_039440" description="In isoform 6." evidence="8">
    <original>GSALDLHLSNVNIASLEKDLEEQDGHDLGAAGPRSLAGSAPVAIPGSLPRAPSLHSPSSASTSPLGSLSQPLPGPVGSSAMTPPQQPPPLRSEPGTLGSAASSYSPLGLNGVPGSIWDFVSGSFSPSPSPILSAGP</original>
    <variation>ALEPTPSSPTSSAVQGVAGELGMGSGGQGCWSHVVGALAAVPAWTHSGDLEWDPSTIRTRVNVGGGPAARPAMTLAREPQLLVVGGCPTRNCSGPAASPQQLLDDAGQGGRGERDSSQRPLRPQTTHRQDTRPVPS</variation>
    <location>
        <begin position="419"/>
        <end position="554"/>
    </location>
</feature>
<feature type="splice variant" id="VSP_039441" description="In isoform 3." evidence="7">
    <original>PQQPPPLRSEPGTLGSAASSYSPL</original>
    <variation>MTCCSQVPPRRRPSLALSPRLDCN</variation>
    <location>
        <begin position="502"/>
        <end position="525"/>
    </location>
</feature>
<feature type="splice variant" id="VSP_039442" description="In isoform 6." evidence="8">
    <location>
        <begin position="555"/>
        <end position="680"/>
    </location>
</feature>
<feature type="splice variant" id="VSP_039443" description="In isoform 1 and isoform 3." evidence="6 7">
    <original>V</original>
    <variation>VKQLQEELEGLGVASTLPGLRGCGDIGTIPLPKLHSLQSQLRLDLEAVDGV</variation>
    <location>
        <position position="630"/>
    </location>
</feature>
<feature type="mutagenesis site" description="No effects on the interaction with RAC1 or SMARCD2; when associated with A-670." evidence="5">
    <original>C</original>
    <variation>A</variation>
    <location>
        <position position="639"/>
    </location>
</feature>
<feature type="mutagenesis site" description="No effects on the interaction with RAC1 or SMARCD2; when associated with A-639." evidence="5">
    <original>C</original>
    <variation>A</variation>
    <location>
        <position position="670"/>
    </location>
</feature>
<feature type="sequence conflict" description="In Ref. 1; CAQ16184." evidence="8" ref="1">
    <original>S</original>
    <variation>R</variation>
    <location>
        <position position="541"/>
    </location>
</feature>
<feature type="sequence conflict" description="In Ref. 2; BAB14178." evidence="8" ref="2">
    <original>I</original>
    <variation>V</variation>
    <location>
        <position position="549"/>
    </location>
</feature>
<proteinExistence type="evidence at protein level"/>
<name>UNKL_HUMAN</name>
<accession>Q9H9P5</accession>
<accession>B0QYN6</accession>
<accession>B1GXI8</accession>
<accession>Q96EV1</accession>
<accession>Q96RZ1</accession>
<accession>Q9BWL5</accession>
<accession>Q9H5K0</accession>
<accession>Q9UJJ8</accession>
<reference key="1">
    <citation type="journal article" date="2010" name="FEBS J.">
        <title>The SWI/SNF protein BAF60b is ubiquitinated through a signalling process involving Rac GTPase and the RING finger protein Unkempt.</title>
        <authorList>
            <person name="Lores P."/>
            <person name="Visvikis O."/>
            <person name="Luna R."/>
            <person name="Lemichez E."/>
            <person name="Gacon G."/>
        </authorList>
    </citation>
    <scope>NUCLEOTIDE SEQUENCE [MRNA] (ISOFORM 4)</scope>
    <scope>FUNCTION</scope>
    <scope>INTERACTION WITH RAC1 AND SMARCD2</scope>
    <scope>SUBCELLULAR LOCATION</scope>
    <scope>MUTAGENESIS OF CYS-639 AND CYS-670</scope>
</reference>
<reference key="2">
    <citation type="journal article" date="2004" name="Nat. Genet.">
        <title>Complete sequencing and characterization of 21,243 full-length human cDNAs.</title>
        <authorList>
            <person name="Ota T."/>
            <person name="Suzuki Y."/>
            <person name="Nishikawa T."/>
            <person name="Otsuki T."/>
            <person name="Sugiyama T."/>
            <person name="Irie R."/>
            <person name="Wakamatsu A."/>
            <person name="Hayashi K."/>
            <person name="Sato H."/>
            <person name="Nagai K."/>
            <person name="Kimura K."/>
            <person name="Makita H."/>
            <person name="Sekine M."/>
            <person name="Obayashi M."/>
            <person name="Nishi T."/>
            <person name="Shibahara T."/>
            <person name="Tanaka T."/>
            <person name="Ishii S."/>
            <person name="Yamamoto J."/>
            <person name="Saito K."/>
            <person name="Kawai Y."/>
            <person name="Isono Y."/>
            <person name="Nakamura Y."/>
            <person name="Nagahari K."/>
            <person name="Murakami K."/>
            <person name="Yasuda T."/>
            <person name="Iwayanagi T."/>
            <person name="Wagatsuma M."/>
            <person name="Shiratori A."/>
            <person name="Sudo H."/>
            <person name="Hosoiri T."/>
            <person name="Kaku Y."/>
            <person name="Kodaira H."/>
            <person name="Kondo H."/>
            <person name="Sugawara M."/>
            <person name="Takahashi M."/>
            <person name="Kanda K."/>
            <person name="Yokoi T."/>
            <person name="Furuya T."/>
            <person name="Kikkawa E."/>
            <person name="Omura Y."/>
            <person name="Abe K."/>
            <person name="Kamihara K."/>
            <person name="Katsuta N."/>
            <person name="Sato K."/>
            <person name="Tanikawa M."/>
            <person name="Yamazaki M."/>
            <person name="Ninomiya K."/>
            <person name="Ishibashi T."/>
            <person name="Yamashita H."/>
            <person name="Murakawa K."/>
            <person name="Fujimori K."/>
            <person name="Tanai H."/>
            <person name="Kimata M."/>
            <person name="Watanabe M."/>
            <person name="Hiraoka S."/>
            <person name="Chiba Y."/>
            <person name="Ishida S."/>
            <person name="Ono Y."/>
            <person name="Takiguchi S."/>
            <person name="Watanabe S."/>
            <person name="Yosida M."/>
            <person name="Hotuta T."/>
            <person name="Kusano J."/>
            <person name="Kanehori K."/>
            <person name="Takahashi-Fujii A."/>
            <person name="Hara H."/>
            <person name="Tanase T.-O."/>
            <person name="Nomura Y."/>
            <person name="Togiya S."/>
            <person name="Komai F."/>
            <person name="Hara R."/>
            <person name="Takeuchi K."/>
            <person name="Arita M."/>
            <person name="Imose N."/>
            <person name="Musashino K."/>
            <person name="Yuuki H."/>
            <person name="Oshima A."/>
            <person name="Sasaki N."/>
            <person name="Aotsuka S."/>
            <person name="Yoshikawa Y."/>
            <person name="Matsunawa H."/>
            <person name="Ichihara T."/>
            <person name="Shiohata N."/>
            <person name="Sano S."/>
            <person name="Moriya S."/>
            <person name="Momiyama H."/>
            <person name="Satoh N."/>
            <person name="Takami S."/>
            <person name="Terashima Y."/>
            <person name="Suzuki O."/>
            <person name="Nakagawa S."/>
            <person name="Senoh A."/>
            <person name="Mizoguchi H."/>
            <person name="Goto Y."/>
            <person name="Shimizu F."/>
            <person name="Wakebe H."/>
            <person name="Hishigaki H."/>
            <person name="Watanabe T."/>
            <person name="Sugiyama A."/>
            <person name="Takemoto M."/>
            <person name="Kawakami B."/>
            <person name="Yamazaki M."/>
            <person name="Watanabe K."/>
            <person name="Kumagai A."/>
            <person name="Itakura S."/>
            <person name="Fukuzumi Y."/>
            <person name="Fujimori Y."/>
            <person name="Komiyama M."/>
            <person name="Tashiro H."/>
            <person name="Tanigami A."/>
            <person name="Fujiwara T."/>
            <person name="Ono T."/>
            <person name="Yamada K."/>
            <person name="Fujii Y."/>
            <person name="Ozaki K."/>
            <person name="Hirao M."/>
            <person name="Ohmori Y."/>
            <person name="Kawabata A."/>
            <person name="Hikiji T."/>
            <person name="Kobatake N."/>
            <person name="Inagaki H."/>
            <person name="Ikema Y."/>
            <person name="Okamoto S."/>
            <person name="Okitani R."/>
            <person name="Kawakami T."/>
            <person name="Noguchi S."/>
            <person name="Itoh T."/>
            <person name="Shigeta K."/>
            <person name="Senba T."/>
            <person name="Matsumura K."/>
            <person name="Nakajima Y."/>
            <person name="Mizuno T."/>
            <person name="Morinaga M."/>
            <person name="Sasaki M."/>
            <person name="Togashi T."/>
            <person name="Oyama M."/>
            <person name="Hata H."/>
            <person name="Watanabe M."/>
            <person name="Komatsu T."/>
            <person name="Mizushima-Sugano J."/>
            <person name="Satoh T."/>
            <person name="Shirai Y."/>
            <person name="Takahashi Y."/>
            <person name="Nakagawa K."/>
            <person name="Okumura K."/>
            <person name="Nagase T."/>
            <person name="Nomura N."/>
            <person name="Kikuchi H."/>
            <person name="Masuho Y."/>
            <person name="Yamashita R."/>
            <person name="Nakai K."/>
            <person name="Yada T."/>
            <person name="Nakamura Y."/>
            <person name="Ohara O."/>
            <person name="Isogai T."/>
            <person name="Sugano S."/>
        </authorList>
    </citation>
    <scope>NUCLEOTIDE SEQUENCE [LARGE SCALE MRNA] (ISOFORMS 1 AND 2)</scope>
</reference>
<reference key="3">
    <citation type="journal article" date="2001" name="Hum. Mol. Genet.">
        <title>Sequence, structure and pathology of the fully annotated terminal 2 Mb of the short arm of human chromosome 16.</title>
        <authorList>
            <person name="Daniels R.J."/>
            <person name="Peden J.F."/>
            <person name="Lloyd C."/>
            <person name="Horsley S.W."/>
            <person name="Clark K."/>
            <person name="Tufarelli C."/>
            <person name="Kearney L."/>
            <person name="Buckle V.J."/>
            <person name="Doggett N.A."/>
            <person name="Flint J."/>
            <person name="Higgs D.R."/>
        </authorList>
    </citation>
    <scope>NUCLEOTIDE SEQUENCE [GENOMIC DNA] (ISOFORMS 2 AND 6)</scope>
</reference>
<reference key="4">
    <citation type="journal article" date="2004" name="Nature">
        <title>The sequence and analysis of duplication-rich human chromosome 16.</title>
        <authorList>
            <person name="Martin J."/>
            <person name="Han C."/>
            <person name="Gordon L.A."/>
            <person name="Terry A."/>
            <person name="Prabhakar S."/>
            <person name="She X."/>
            <person name="Xie G."/>
            <person name="Hellsten U."/>
            <person name="Chan Y.M."/>
            <person name="Altherr M."/>
            <person name="Couronne O."/>
            <person name="Aerts A."/>
            <person name="Bajorek E."/>
            <person name="Black S."/>
            <person name="Blumer H."/>
            <person name="Branscomb E."/>
            <person name="Brown N.C."/>
            <person name="Bruno W.J."/>
            <person name="Buckingham J.M."/>
            <person name="Callen D.F."/>
            <person name="Campbell C.S."/>
            <person name="Campbell M.L."/>
            <person name="Campbell E.W."/>
            <person name="Caoile C."/>
            <person name="Challacombe J.F."/>
            <person name="Chasteen L.A."/>
            <person name="Chertkov O."/>
            <person name="Chi H.C."/>
            <person name="Christensen M."/>
            <person name="Clark L.M."/>
            <person name="Cohn J.D."/>
            <person name="Denys M."/>
            <person name="Detter J.C."/>
            <person name="Dickson M."/>
            <person name="Dimitrijevic-Bussod M."/>
            <person name="Escobar J."/>
            <person name="Fawcett J.J."/>
            <person name="Flowers D."/>
            <person name="Fotopulos D."/>
            <person name="Glavina T."/>
            <person name="Gomez M."/>
            <person name="Gonzales E."/>
            <person name="Goodstein D."/>
            <person name="Goodwin L.A."/>
            <person name="Grady D.L."/>
            <person name="Grigoriev I."/>
            <person name="Groza M."/>
            <person name="Hammon N."/>
            <person name="Hawkins T."/>
            <person name="Haydu L."/>
            <person name="Hildebrand C.E."/>
            <person name="Huang W."/>
            <person name="Israni S."/>
            <person name="Jett J."/>
            <person name="Jewett P.B."/>
            <person name="Kadner K."/>
            <person name="Kimball H."/>
            <person name="Kobayashi A."/>
            <person name="Krawczyk M.-C."/>
            <person name="Leyba T."/>
            <person name="Longmire J.L."/>
            <person name="Lopez F."/>
            <person name="Lou Y."/>
            <person name="Lowry S."/>
            <person name="Ludeman T."/>
            <person name="Manohar C.F."/>
            <person name="Mark G.A."/>
            <person name="McMurray K.L."/>
            <person name="Meincke L.J."/>
            <person name="Morgan J."/>
            <person name="Moyzis R.K."/>
            <person name="Mundt M.O."/>
            <person name="Munk A.C."/>
            <person name="Nandkeshwar R.D."/>
            <person name="Pitluck S."/>
            <person name="Pollard M."/>
            <person name="Predki P."/>
            <person name="Parson-Quintana B."/>
            <person name="Ramirez L."/>
            <person name="Rash S."/>
            <person name="Retterer J."/>
            <person name="Ricke D.O."/>
            <person name="Robinson D.L."/>
            <person name="Rodriguez A."/>
            <person name="Salamov A."/>
            <person name="Saunders E.H."/>
            <person name="Scott D."/>
            <person name="Shough T."/>
            <person name="Stallings R.L."/>
            <person name="Stalvey M."/>
            <person name="Sutherland R.D."/>
            <person name="Tapia R."/>
            <person name="Tesmer J.G."/>
            <person name="Thayer N."/>
            <person name="Thompson L.S."/>
            <person name="Tice H."/>
            <person name="Torney D.C."/>
            <person name="Tran-Gyamfi M."/>
            <person name="Tsai M."/>
            <person name="Ulanovsky L.E."/>
            <person name="Ustaszewska A."/>
            <person name="Vo N."/>
            <person name="White P.S."/>
            <person name="Williams A.L."/>
            <person name="Wills P.L."/>
            <person name="Wu J.-R."/>
            <person name="Wu K."/>
            <person name="Yang J."/>
            <person name="DeJong P."/>
            <person name="Bruce D."/>
            <person name="Doggett N.A."/>
            <person name="Deaven L."/>
            <person name="Schmutz J."/>
            <person name="Grimwood J."/>
            <person name="Richardson P."/>
            <person name="Rokhsar D.S."/>
            <person name="Eichler E.E."/>
            <person name="Gilna P."/>
            <person name="Lucas S.M."/>
            <person name="Myers R.M."/>
            <person name="Rubin E.M."/>
            <person name="Pennacchio L.A."/>
        </authorList>
    </citation>
    <scope>NUCLEOTIDE SEQUENCE [LARGE SCALE GENOMIC DNA]</scope>
</reference>
<reference key="5">
    <citation type="submission" date="2005-09" db="EMBL/GenBank/DDBJ databases">
        <authorList>
            <person name="Mural R.J."/>
            <person name="Istrail S."/>
            <person name="Sutton G.G."/>
            <person name="Florea L."/>
            <person name="Halpern A.L."/>
            <person name="Mobarry C.M."/>
            <person name="Lippert R."/>
            <person name="Walenz B."/>
            <person name="Shatkay H."/>
            <person name="Dew I."/>
            <person name="Miller J.R."/>
            <person name="Flanigan M.J."/>
            <person name="Edwards N.J."/>
            <person name="Bolanos R."/>
            <person name="Fasulo D."/>
            <person name="Halldorsson B.V."/>
            <person name="Hannenhalli S."/>
            <person name="Turner R."/>
            <person name="Yooseph S."/>
            <person name="Lu F."/>
            <person name="Nusskern D.R."/>
            <person name="Shue B.C."/>
            <person name="Zheng X.H."/>
            <person name="Zhong F."/>
            <person name="Delcher A.L."/>
            <person name="Huson D.H."/>
            <person name="Kravitz S.A."/>
            <person name="Mouchard L."/>
            <person name="Reinert K."/>
            <person name="Remington K.A."/>
            <person name="Clark A.G."/>
            <person name="Waterman M.S."/>
            <person name="Eichler E.E."/>
            <person name="Adams M.D."/>
            <person name="Hunkapiller M.W."/>
            <person name="Myers E.W."/>
            <person name="Venter J.C."/>
        </authorList>
    </citation>
    <scope>NUCLEOTIDE SEQUENCE [LARGE SCALE GENOMIC DNA]</scope>
</reference>
<reference key="6">
    <citation type="journal article" date="2004" name="Genome Res.">
        <title>The status, quality, and expansion of the NIH full-length cDNA project: the Mammalian Gene Collection (MGC).</title>
        <authorList>
            <consortium name="The MGC Project Team"/>
        </authorList>
    </citation>
    <scope>NUCLEOTIDE SEQUENCE [LARGE SCALE MRNA] (ISOFORMS 3 AND 5)</scope>
    <source>
        <tissue>Placenta</tissue>
    </source>
</reference>
<reference key="7">
    <citation type="journal article" date="2014" name="J. Proteomics">
        <title>An enzyme assisted RP-RPLC approach for in-depth analysis of human liver phosphoproteome.</title>
        <authorList>
            <person name="Bian Y."/>
            <person name="Song C."/>
            <person name="Cheng K."/>
            <person name="Dong M."/>
            <person name="Wang F."/>
            <person name="Huang J."/>
            <person name="Sun D."/>
            <person name="Wang L."/>
            <person name="Ye M."/>
            <person name="Zou H."/>
        </authorList>
    </citation>
    <scope>IDENTIFICATION BY MASS SPECTROMETRY [LARGE SCALE ANALYSIS]</scope>
    <source>
        <tissue>Liver</tissue>
    </source>
</reference>
<dbReference type="EC" id="2.3.2.-"/>
<dbReference type="EMBL" id="AM944365">
    <property type="protein sequence ID" value="CAQ16184.1"/>
    <property type="molecule type" value="mRNA"/>
</dbReference>
<dbReference type="EMBL" id="AK022685">
    <property type="protein sequence ID" value="BAB14178.1"/>
    <property type="molecule type" value="mRNA"/>
</dbReference>
<dbReference type="EMBL" id="AK027013">
    <property type="protein sequence ID" value="BAB15626.1"/>
    <property type="molecule type" value="mRNA"/>
</dbReference>
<dbReference type="EMBL" id="AE006467">
    <property type="protein sequence ID" value="AAK61278.1"/>
    <property type="molecule type" value="Genomic_DNA"/>
</dbReference>
<dbReference type="EMBL" id="AE006467">
    <property type="protein sequence ID" value="AAK61279.1"/>
    <property type="molecule type" value="Genomic_DNA"/>
</dbReference>
<dbReference type="EMBL" id="AL031709">
    <property type="status" value="NOT_ANNOTATED_CDS"/>
    <property type="molecule type" value="Genomic_DNA"/>
</dbReference>
<dbReference type="EMBL" id="AL031721">
    <property type="status" value="NOT_ANNOTATED_CDS"/>
    <property type="molecule type" value="Genomic_DNA"/>
</dbReference>
<dbReference type="EMBL" id="AL032819">
    <property type="status" value="NOT_ANNOTATED_CDS"/>
    <property type="molecule type" value="Genomic_DNA"/>
</dbReference>
<dbReference type="EMBL" id="CH471112">
    <property type="protein sequence ID" value="EAW85659.1"/>
    <property type="molecule type" value="Genomic_DNA"/>
</dbReference>
<dbReference type="EMBL" id="CH471112">
    <property type="protein sequence ID" value="EAW85660.1"/>
    <property type="molecule type" value="Genomic_DNA"/>
</dbReference>
<dbReference type="EMBL" id="CH471112">
    <property type="protein sequence ID" value="EAW85662.1"/>
    <property type="molecule type" value="Genomic_DNA"/>
</dbReference>
<dbReference type="EMBL" id="BC000150">
    <property type="protein sequence ID" value="AAH00150.1"/>
    <property type="molecule type" value="mRNA"/>
</dbReference>
<dbReference type="EMBL" id="BC011924">
    <property type="protein sequence ID" value="AAH11924.1"/>
    <property type="molecule type" value="mRNA"/>
</dbReference>
<dbReference type="CCDS" id="CCDS32359.1">
    <molecule id="Q9H9P5-5"/>
</dbReference>
<dbReference type="CCDS" id="CCDS53980.1">
    <molecule id="Q9H9P5-2"/>
</dbReference>
<dbReference type="CCDS" id="CCDS61787.1">
    <molecule id="Q9H9P5-3"/>
</dbReference>
<dbReference type="PIR" id="T45063">
    <property type="entry name" value="T45063"/>
</dbReference>
<dbReference type="RefSeq" id="NP_001032202.1">
    <molecule id="Q9H9P5-5"/>
    <property type="nucleotide sequence ID" value="NM_001037125.4"/>
</dbReference>
<dbReference type="RefSeq" id="NP_001180317.2">
    <property type="nucleotide sequence ID" value="NM_001193388.3"/>
</dbReference>
<dbReference type="RefSeq" id="NP_001180318.1">
    <molecule id="Q9H9P5-2"/>
    <property type="nucleotide sequence ID" value="NM_001193389.2"/>
</dbReference>
<dbReference type="RefSeq" id="NP_001263343.1">
    <molecule id="Q9H9P5-3"/>
    <property type="nucleotide sequence ID" value="NM_001276414.2"/>
</dbReference>
<dbReference type="RefSeq" id="NP_001354551.1">
    <molecule id="Q9H9P5-1"/>
    <property type="nucleotide sequence ID" value="NM_001367622.1"/>
</dbReference>
<dbReference type="RefSeq" id="XP_016879057.1">
    <property type="nucleotide sequence ID" value="XM_017023568.1"/>
</dbReference>
<dbReference type="RefSeq" id="XP_016879058.1">
    <molecule id="Q9H9P5-1"/>
    <property type="nucleotide sequence ID" value="XM_017023569.2"/>
</dbReference>
<dbReference type="RefSeq" id="XP_047290448.1">
    <molecule id="Q9H9P5-1"/>
    <property type="nucleotide sequence ID" value="XM_047434492.1"/>
</dbReference>
<dbReference type="RefSeq" id="XP_047290449.1">
    <molecule id="Q9H9P5-1"/>
    <property type="nucleotide sequence ID" value="XM_047434493.1"/>
</dbReference>
<dbReference type="RefSeq" id="XP_047290450.1">
    <molecule id="Q9H9P5-2"/>
    <property type="nucleotide sequence ID" value="XM_047434494.1"/>
</dbReference>
<dbReference type="RefSeq" id="XP_047290451.1">
    <molecule id="Q9H9P5-2"/>
    <property type="nucleotide sequence ID" value="XM_047434495.1"/>
</dbReference>
<dbReference type="RefSeq" id="XP_054169679.1">
    <molecule id="Q9H9P5-1"/>
    <property type="nucleotide sequence ID" value="XM_054313704.1"/>
</dbReference>
<dbReference type="RefSeq" id="XP_054169680.1">
    <molecule id="Q9H9P5-1"/>
    <property type="nucleotide sequence ID" value="XM_054313705.1"/>
</dbReference>
<dbReference type="RefSeq" id="XP_054169681.1">
    <molecule id="Q9H9P5-1"/>
    <property type="nucleotide sequence ID" value="XM_054313706.1"/>
</dbReference>
<dbReference type="RefSeq" id="XP_054169682.1">
    <molecule id="Q9H9P5-2"/>
    <property type="nucleotide sequence ID" value="XM_054313707.1"/>
</dbReference>
<dbReference type="RefSeq" id="XP_054169683.1">
    <molecule id="Q9H9P5-2"/>
    <property type="nucleotide sequence ID" value="XM_054313708.1"/>
</dbReference>
<dbReference type="SMR" id="Q9H9P5"/>
<dbReference type="BioGRID" id="122243">
    <property type="interactions" value="71"/>
</dbReference>
<dbReference type="FunCoup" id="Q9H9P5">
    <property type="interactions" value="1177"/>
</dbReference>
<dbReference type="IntAct" id="Q9H9P5">
    <property type="interactions" value="36"/>
</dbReference>
<dbReference type="MINT" id="Q9H9P5"/>
<dbReference type="STRING" id="9606.ENSP00000301712"/>
<dbReference type="GlyGen" id="Q9H9P5">
    <property type="glycosylation" value="1 site, 1 O-linked glycan (1 site)"/>
</dbReference>
<dbReference type="iPTMnet" id="Q9H9P5"/>
<dbReference type="PhosphoSitePlus" id="Q9H9P5"/>
<dbReference type="BioMuta" id="UNKL"/>
<dbReference type="DMDM" id="300669704"/>
<dbReference type="jPOST" id="Q9H9P5"/>
<dbReference type="MassIVE" id="Q9H9P5"/>
<dbReference type="PaxDb" id="9606-ENSP00000301712"/>
<dbReference type="PeptideAtlas" id="Q9H9P5"/>
<dbReference type="ProteomicsDB" id="81339">
    <molecule id="Q9H9P5-4"/>
</dbReference>
<dbReference type="ProteomicsDB" id="81340">
    <molecule id="Q9H9P5-1"/>
</dbReference>
<dbReference type="ProteomicsDB" id="81341">
    <molecule id="Q9H9P5-2"/>
</dbReference>
<dbReference type="ProteomicsDB" id="81342">
    <molecule id="Q9H9P5-3"/>
</dbReference>
<dbReference type="ProteomicsDB" id="81343">
    <molecule id="Q9H9P5-5"/>
</dbReference>
<dbReference type="ProteomicsDB" id="81344">
    <molecule id="Q9H9P5-6"/>
</dbReference>
<dbReference type="Antibodypedia" id="34818">
    <property type="antibodies" value="116 antibodies from 19 providers"/>
</dbReference>
<dbReference type="DNASU" id="64718"/>
<dbReference type="Ensembl" id="ENST00000248104.11">
    <molecule id="Q9H9P5-3"/>
    <property type="protein sequence ID" value="ENSP00000248104.7"/>
    <property type="gene ID" value="ENSG00000059145.19"/>
</dbReference>
<dbReference type="Ensembl" id="ENST00000301712.5">
    <molecule id="Q9H9P5-5"/>
    <property type="protein sequence ID" value="ENSP00000301712.5"/>
    <property type="gene ID" value="ENSG00000059145.19"/>
</dbReference>
<dbReference type="Ensembl" id="ENST00000397464.5">
    <molecule id="Q9H9P5-2"/>
    <property type="protein sequence ID" value="ENSP00000380606.1"/>
    <property type="gene ID" value="ENSG00000059145.19"/>
</dbReference>
<dbReference type="Ensembl" id="ENST00000674376.1">
    <molecule id="Q9H9P5-2"/>
    <property type="protein sequence ID" value="ENSP00000501444.1"/>
    <property type="gene ID" value="ENSG00000059145.19"/>
</dbReference>
<dbReference type="GeneID" id="64718"/>
<dbReference type="KEGG" id="hsa:64718"/>
<dbReference type="UCSC" id="uc002clo.3">
    <molecule id="Q9H9P5-4"/>
    <property type="organism name" value="human"/>
</dbReference>
<dbReference type="AGR" id="HGNC:14184"/>
<dbReference type="CTD" id="64718"/>
<dbReference type="DisGeNET" id="64718"/>
<dbReference type="GeneCards" id="UNKL"/>
<dbReference type="HGNC" id="HGNC:14184">
    <property type="gene designation" value="UNKL"/>
</dbReference>
<dbReference type="HPA" id="ENSG00000059145">
    <property type="expression patterns" value="Low tissue specificity"/>
</dbReference>
<dbReference type="MalaCards" id="UNKL"/>
<dbReference type="MIM" id="617463">
    <property type="type" value="gene"/>
</dbReference>
<dbReference type="neXtProt" id="NX_Q9H9P5"/>
<dbReference type="OpenTargets" id="ENSG00000059145"/>
<dbReference type="PharmGKB" id="PA37855"/>
<dbReference type="VEuPathDB" id="HostDB:ENSG00000059145"/>
<dbReference type="eggNOG" id="KOG1595">
    <property type="taxonomic scope" value="Eukaryota"/>
</dbReference>
<dbReference type="GeneTree" id="ENSGT00940000158822"/>
<dbReference type="HOGENOM" id="CLU_1363135_0_0_1"/>
<dbReference type="InParanoid" id="Q9H9P5"/>
<dbReference type="OrthoDB" id="20534at2759"/>
<dbReference type="PAN-GO" id="Q9H9P5">
    <property type="GO annotations" value="0 GO annotations based on evolutionary models"/>
</dbReference>
<dbReference type="PhylomeDB" id="Q9H9P5"/>
<dbReference type="TreeFam" id="TF314982"/>
<dbReference type="PathwayCommons" id="Q9H9P5"/>
<dbReference type="Reactome" id="R-HSA-983168">
    <property type="pathway name" value="Antigen processing: Ubiquitination &amp; Proteasome degradation"/>
</dbReference>
<dbReference type="SignaLink" id="Q9H9P5"/>
<dbReference type="SIGNOR" id="Q9H9P5"/>
<dbReference type="UniPathway" id="UPA00143"/>
<dbReference type="BioGRID-ORCS" id="64718">
    <property type="hits" value="10 hits in 1145 CRISPR screens"/>
</dbReference>
<dbReference type="ChiTaRS" id="UNKL">
    <property type="organism name" value="human"/>
</dbReference>
<dbReference type="GeneWiki" id="UNKL"/>
<dbReference type="GenomeRNAi" id="64718"/>
<dbReference type="Pharos" id="Q9H9P5">
    <property type="development level" value="Tdark"/>
</dbReference>
<dbReference type="PRO" id="PR:Q9H9P5"/>
<dbReference type="Proteomes" id="UP000005640">
    <property type="component" value="Chromosome 16"/>
</dbReference>
<dbReference type="RNAct" id="Q9H9P5">
    <property type="molecule type" value="protein"/>
</dbReference>
<dbReference type="Bgee" id="ENSG00000059145">
    <property type="expression patterns" value="Expressed in secondary oocyte and 175 other cell types or tissues"/>
</dbReference>
<dbReference type="ExpressionAtlas" id="Q9H9P5">
    <property type="expression patterns" value="baseline and differential"/>
</dbReference>
<dbReference type="GO" id="GO:0005829">
    <property type="term" value="C:cytosol"/>
    <property type="evidence" value="ECO:0000314"/>
    <property type="project" value="HPA"/>
</dbReference>
<dbReference type="GO" id="GO:0005634">
    <property type="term" value="C:nucleus"/>
    <property type="evidence" value="ECO:0007669"/>
    <property type="project" value="UniProtKB-SubCell"/>
</dbReference>
<dbReference type="GO" id="GO:0016740">
    <property type="term" value="F:transferase activity"/>
    <property type="evidence" value="ECO:0007669"/>
    <property type="project" value="UniProtKB-KW"/>
</dbReference>
<dbReference type="GO" id="GO:0008270">
    <property type="term" value="F:zinc ion binding"/>
    <property type="evidence" value="ECO:0007669"/>
    <property type="project" value="UniProtKB-KW"/>
</dbReference>
<dbReference type="GO" id="GO:0016567">
    <property type="term" value="P:protein ubiquitination"/>
    <property type="evidence" value="ECO:0007669"/>
    <property type="project" value="UniProtKB-UniPathway"/>
</dbReference>
<dbReference type="Gene3D" id="3.30.40.10">
    <property type="entry name" value="Zinc/RING finger domain, C3HC4 (zinc finger)"/>
    <property type="match status" value="1"/>
</dbReference>
<dbReference type="InterPro" id="IPR045234">
    <property type="entry name" value="Unkempt-like"/>
</dbReference>
<dbReference type="InterPro" id="IPR040594">
    <property type="entry name" value="Unkempt_Znf"/>
</dbReference>
<dbReference type="InterPro" id="IPR000571">
    <property type="entry name" value="Znf_CCCH"/>
</dbReference>
<dbReference type="InterPro" id="IPR036855">
    <property type="entry name" value="Znf_CCCH_sf"/>
</dbReference>
<dbReference type="InterPro" id="IPR001841">
    <property type="entry name" value="Znf_RING"/>
</dbReference>
<dbReference type="InterPro" id="IPR013083">
    <property type="entry name" value="Znf_RING/FYVE/PHD"/>
</dbReference>
<dbReference type="PANTHER" id="PTHR14493:SF37">
    <property type="entry name" value="E3 UBIQUITIN-PROTEIN LIGASE UNKL-RELATED"/>
    <property type="match status" value="1"/>
</dbReference>
<dbReference type="PANTHER" id="PTHR14493">
    <property type="entry name" value="UNKEMPT FAMILY MEMBER"/>
    <property type="match status" value="1"/>
</dbReference>
<dbReference type="Pfam" id="PF13920">
    <property type="entry name" value="zf-C3HC4_3"/>
    <property type="match status" value="1"/>
</dbReference>
<dbReference type="Pfam" id="PF00642">
    <property type="entry name" value="zf-CCCH"/>
    <property type="match status" value="1"/>
</dbReference>
<dbReference type="Pfam" id="PF23261">
    <property type="entry name" value="zf-CCCH_11"/>
    <property type="match status" value="1"/>
</dbReference>
<dbReference type="Pfam" id="PF25427">
    <property type="entry name" value="zf-CCCH_UNK"/>
    <property type="match status" value="1"/>
</dbReference>
<dbReference type="Pfam" id="PF23035">
    <property type="entry name" value="zf-CCCH_UNK-like_4th"/>
    <property type="match status" value="1"/>
</dbReference>
<dbReference type="Pfam" id="PF18384">
    <property type="entry name" value="zf_CCCH_5"/>
    <property type="match status" value="1"/>
</dbReference>
<dbReference type="SMART" id="SM00356">
    <property type="entry name" value="ZnF_C3H1"/>
    <property type="match status" value="4"/>
</dbReference>
<dbReference type="SUPFAM" id="SSF90229">
    <property type="entry name" value="CCCH zinc finger"/>
    <property type="match status" value="1"/>
</dbReference>
<dbReference type="PROSITE" id="PS50103">
    <property type="entry name" value="ZF_C3H1"/>
    <property type="match status" value="4"/>
</dbReference>
<dbReference type="PROSITE" id="PS50089">
    <property type="entry name" value="ZF_RING_2"/>
    <property type="match status" value="1"/>
</dbReference>
<keyword id="KW-0025">Alternative splicing</keyword>
<keyword id="KW-0175">Coiled coil</keyword>
<keyword id="KW-0963">Cytoplasm</keyword>
<keyword id="KW-0479">Metal-binding</keyword>
<keyword id="KW-0539">Nucleus</keyword>
<keyword id="KW-1267">Proteomics identification</keyword>
<keyword id="KW-1185">Reference proteome</keyword>
<keyword id="KW-0677">Repeat</keyword>
<keyword id="KW-0808">Transferase</keyword>
<keyword id="KW-0832">Ubl conjugation</keyword>
<keyword id="KW-0833">Ubl conjugation pathway</keyword>
<keyword id="KW-0862">Zinc</keyword>
<keyword id="KW-0863">Zinc-finger</keyword>
<evidence type="ECO:0000255" key="1"/>
<evidence type="ECO:0000255" key="2">
    <source>
        <dbReference type="PROSITE-ProRule" id="PRU00175"/>
    </source>
</evidence>
<evidence type="ECO:0000255" key="3">
    <source>
        <dbReference type="PROSITE-ProRule" id="PRU00723"/>
    </source>
</evidence>
<evidence type="ECO:0000256" key="4">
    <source>
        <dbReference type="SAM" id="MobiDB-lite"/>
    </source>
</evidence>
<evidence type="ECO:0000269" key="5">
    <source>
    </source>
</evidence>
<evidence type="ECO:0000303" key="6">
    <source>
    </source>
</evidence>
<evidence type="ECO:0000303" key="7">
    <source>
    </source>
</evidence>
<evidence type="ECO:0000305" key="8"/>
<evidence type="ECO:0000305" key="9">
    <source>
    </source>
</evidence>
<organism>
    <name type="scientific">Homo sapiens</name>
    <name type="common">Human</name>
    <dbReference type="NCBI Taxonomy" id="9606"/>
    <lineage>
        <taxon>Eukaryota</taxon>
        <taxon>Metazoa</taxon>
        <taxon>Chordata</taxon>
        <taxon>Craniata</taxon>
        <taxon>Vertebrata</taxon>
        <taxon>Euteleostomi</taxon>
        <taxon>Mammalia</taxon>
        <taxon>Eutheria</taxon>
        <taxon>Euarchontoglires</taxon>
        <taxon>Primates</taxon>
        <taxon>Haplorrhini</taxon>
        <taxon>Catarrhini</taxon>
        <taxon>Hominidae</taxon>
        <taxon>Homo</taxon>
    </lineage>
</organism>